<feature type="chain" id="PRO_0000076029" description="Glyoxylate/hydroxypyruvate reductase B">
    <location>
        <begin position="1"/>
        <end position="324"/>
    </location>
</feature>
<feature type="active site" evidence="1">
    <location>
        <position position="237"/>
    </location>
</feature>
<feature type="active site" evidence="1">
    <location>
        <position position="266"/>
    </location>
</feature>
<feature type="active site" description="Proton donor" evidence="1">
    <location>
        <position position="285"/>
    </location>
</feature>
<proteinExistence type="evidence at protein level"/>
<reference key="1">
    <citation type="journal article" date="1994" name="Nucleic Acids Res.">
        <title>Analysis of the Escherichia coli genome. V. DNA sequence of the region from 76.0 to 81.5 minutes.</title>
        <authorList>
            <person name="Sofia H.J."/>
            <person name="Burland V."/>
            <person name="Daniels D.L."/>
            <person name="Plunkett G. III"/>
            <person name="Blattner F.R."/>
        </authorList>
    </citation>
    <scope>NUCLEOTIDE SEQUENCE [LARGE SCALE GENOMIC DNA]</scope>
    <source>
        <strain>K12 / MG1655 / ATCC 47076</strain>
    </source>
</reference>
<reference key="2">
    <citation type="journal article" date="1997" name="Science">
        <title>The complete genome sequence of Escherichia coli K-12.</title>
        <authorList>
            <person name="Blattner F.R."/>
            <person name="Plunkett G. III"/>
            <person name="Bloch C.A."/>
            <person name="Perna N.T."/>
            <person name="Burland V."/>
            <person name="Riley M."/>
            <person name="Collado-Vides J."/>
            <person name="Glasner J.D."/>
            <person name="Rode C.K."/>
            <person name="Mayhew G.F."/>
            <person name="Gregor J."/>
            <person name="Davis N.W."/>
            <person name="Kirkpatrick H.A."/>
            <person name="Goeden M.A."/>
            <person name="Rose D.J."/>
            <person name="Mau B."/>
            <person name="Shao Y."/>
        </authorList>
    </citation>
    <scope>NUCLEOTIDE SEQUENCE [LARGE SCALE GENOMIC DNA]</scope>
    <scope>SEQUENCE REVISION TO C-TERMINUS</scope>
    <source>
        <strain>K12 / MG1655 / ATCC 47076</strain>
    </source>
</reference>
<reference key="3">
    <citation type="journal article" date="2006" name="Mol. Syst. Biol.">
        <title>Highly accurate genome sequences of Escherichia coli K-12 strains MG1655 and W3110.</title>
        <authorList>
            <person name="Hayashi K."/>
            <person name="Morooka N."/>
            <person name="Yamamoto Y."/>
            <person name="Fujita K."/>
            <person name="Isono K."/>
            <person name="Choi S."/>
            <person name="Ohtsubo E."/>
            <person name="Baba T."/>
            <person name="Wanner B.L."/>
            <person name="Mori H."/>
            <person name="Horiuchi T."/>
        </authorList>
    </citation>
    <scope>NUCLEOTIDE SEQUENCE [LARGE SCALE GENOMIC DNA]</scope>
    <source>
        <strain>K12 / W3110 / ATCC 27325 / DSM 5911</strain>
    </source>
</reference>
<reference key="4">
    <citation type="journal article" date="1998" name="J. Bacteriol.">
        <title>The yiaE gene, located at 80.1 minutes on the Escherichia coli chromosome, encodes a 2-ketoaldonate reductase.</title>
        <authorList>
            <person name="Yum D.-Y."/>
            <person name="Lee B.-Y."/>
            <person name="Hahm D.-H."/>
            <person name="Pan J.-G."/>
        </authorList>
    </citation>
    <scope>PROTEIN SEQUENCE OF 1-22</scope>
    <scope>SUBUNIT</scope>
    <scope>SUBSTRATE SPECIFICITY</scope>
    <scope>BIOPHYSICOCHEMICAL PROPERTIES</scope>
    <source>
        <strain>K12 / W3110 / ATCC 27325 / DSM 5911</strain>
    </source>
</reference>
<reference key="5">
    <citation type="journal article" date="1997" name="Electrophoresis">
        <title>Comparing the predicted and observed properties of proteins encoded in the genome of Escherichia coli K-12.</title>
        <authorList>
            <person name="Link A.J."/>
            <person name="Robison K."/>
            <person name="Church G.M."/>
        </authorList>
    </citation>
    <scope>PROTEIN SEQUENCE OF 1-8</scope>
    <source>
        <strain>K12 / EMG2</strain>
    </source>
</reference>
<reference key="6">
    <citation type="journal article" date="2001" name="Biochem. J.">
        <title>Biochemical characterization of the 2-ketoacid reductases encoded by ycdW and yiaE genes in Escherichia coli.</title>
        <authorList>
            <person name="Nunez M.F."/>
            <person name="Pellicer M.T."/>
            <person name="Badia J."/>
            <person name="Aguilar J."/>
            <person name="Baldoma L."/>
        </authorList>
    </citation>
    <scope>CATALYTIC ACTIVITY</scope>
    <scope>SUBSTRATE SPECIFICITY</scope>
    <scope>INDUCTION</scope>
    <scope>BIOPHYSICOCHEMICAL PROPERTIES</scope>
    <source>
        <strain>K12 / MC4100 / ATCC 35695 / DSM 6574</strain>
    </source>
</reference>
<keyword id="KW-0963">Cytoplasm</keyword>
<keyword id="KW-0903">Direct protein sequencing</keyword>
<keyword id="KW-0311">Gluconate utilization</keyword>
<keyword id="KW-0520">NAD</keyword>
<keyword id="KW-0521">NADP</keyword>
<keyword id="KW-0560">Oxidoreductase</keyword>
<keyword id="KW-1185">Reference proteome</keyword>
<dbReference type="EC" id="1.1.1.79"/>
<dbReference type="EC" id="1.1.1.81"/>
<dbReference type="EC" id="1.1.1.215"/>
<dbReference type="EMBL" id="U00039">
    <property type="protein sequence ID" value="AAB18530.1"/>
    <property type="status" value="ALT_FRAME"/>
    <property type="molecule type" value="Genomic_DNA"/>
</dbReference>
<dbReference type="EMBL" id="U00096">
    <property type="protein sequence ID" value="AAC76577.2"/>
    <property type="molecule type" value="Genomic_DNA"/>
</dbReference>
<dbReference type="EMBL" id="AP009048">
    <property type="protein sequence ID" value="BAE77742.1"/>
    <property type="molecule type" value="Genomic_DNA"/>
</dbReference>
<dbReference type="PIR" id="C65154">
    <property type="entry name" value="C65154"/>
</dbReference>
<dbReference type="RefSeq" id="NP_418009.2">
    <property type="nucleotide sequence ID" value="NC_000913.3"/>
</dbReference>
<dbReference type="RefSeq" id="WP_000805038.1">
    <property type="nucleotide sequence ID" value="NZ_SSZK01000068.1"/>
</dbReference>
<dbReference type="SMR" id="P37666"/>
<dbReference type="BioGRID" id="4259301">
    <property type="interactions" value="36"/>
</dbReference>
<dbReference type="DIP" id="DIP-10997N"/>
<dbReference type="FunCoup" id="P37666">
    <property type="interactions" value="589"/>
</dbReference>
<dbReference type="IntAct" id="P37666">
    <property type="interactions" value="1"/>
</dbReference>
<dbReference type="STRING" id="511145.b3553"/>
<dbReference type="jPOST" id="P37666"/>
<dbReference type="PaxDb" id="511145-b3553"/>
<dbReference type="EnsemblBacteria" id="AAC76577">
    <property type="protein sequence ID" value="AAC76577"/>
    <property type="gene ID" value="b3553"/>
</dbReference>
<dbReference type="GeneID" id="948074"/>
<dbReference type="KEGG" id="ecj:JW5656"/>
<dbReference type="KEGG" id="eco:b3553"/>
<dbReference type="KEGG" id="ecoc:C3026_19260"/>
<dbReference type="PATRIC" id="fig|1411691.4.peg.3161"/>
<dbReference type="EchoBASE" id="EB2181"/>
<dbReference type="eggNOG" id="COG1052">
    <property type="taxonomic scope" value="Bacteria"/>
</dbReference>
<dbReference type="HOGENOM" id="CLU_019796_1_2_6"/>
<dbReference type="InParanoid" id="P37666"/>
<dbReference type="OMA" id="PHIAWAY"/>
<dbReference type="OrthoDB" id="9805416at2"/>
<dbReference type="PhylomeDB" id="P37666"/>
<dbReference type="BioCyc" id="EcoCyc:MONOMER-43"/>
<dbReference type="BioCyc" id="MetaCyc:MONOMER-43"/>
<dbReference type="SABIO-RK" id="P37666"/>
<dbReference type="PRO" id="PR:P37666"/>
<dbReference type="Proteomes" id="UP000000625">
    <property type="component" value="Chromosome"/>
</dbReference>
<dbReference type="GO" id="GO:0005829">
    <property type="term" value="C:cytosol"/>
    <property type="evidence" value="ECO:0000314"/>
    <property type="project" value="EcoCyc"/>
</dbReference>
<dbReference type="GO" id="GO:0005886">
    <property type="term" value="C:plasma membrane"/>
    <property type="evidence" value="ECO:0007669"/>
    <property type="project" value="UniProtKB-UniRule"/>
</dbReference>
<dbReference type="GO" id="GO:0008873">
    <property type="term" value="F:gluconate 2-dehydrogenase activity"/>
    <property type="evidence" value="ECO:0000314"/>
    <property type="project" value="EcoCyc"/>
</dbReference>
<dbReference type="GO" id="GO:0030267">
    <property type="term" value="F:glyoxylate reductase (NADPH) activity"/>
    <property type="evidence" value="ECO:0000314"/>
    <property type="project" value="EcoCyc"/>
</dbReference>
<dbReference type="GO" id="GO:0008465">
    <property type="term" value="F:hydroxypyruvate reductase (NADH) activity"/>
    <property type="evidence" value="ECO:0007669"/>
    <property type="project" value="RHEA"/>
</dbReference>
<dbReference type="GO" id="GO:0120509">
    <property type="term" value="F:hydroxypyruvate reductase (NADPH) activity"/>
    <property type="evidence" value="ECO:0007669"/>
    <property type="project" value="RHEA"/>
</dbReference>
<dbReference type="GO" id="GO:0016618">
    <property type="term" value="F:hydroxypyruvate reductase [NAD(P)H] activity"/>
    <property type="evidence" value="ECO:0000318"/>
    <property type="project" value="GO_Central"/>
</dbReference>
<dbReference type="GO" id="GO:0051287">
    <property type="term" value="F:NAD binding"/>
    <property type="evidence" value="ECO:0007669"/>
    <property type="project" value="InterPro"/>
</dbReference>
<dbReference type="GO" id="GO:0019521">
    <property type="term" value="P:D-gluconate metabolic process"/>
    <property type="evidence" value="ECO:0007669"/>
    <property type="project" value="UniProtKB-KW"/>
</dbReference>
<dbReference type="GO" id="GO:0046181">
    <property type="term" value="P:ketogluconate catabolic process"/>
    <property type="evidence" value="ECO:0000315"/>
    <property type="project" value="EcoCyc"/>
</dbReference>
<dbReference type="CDD" id="cd05301">
    <property type="entry name" value="GDH"/>
    <property type="match status" value="1"/>
</dbReference>
<dbReference type="FunFam" id="3.40.50.720:FF:000026">
    <property type="entry name" value="Glyoxylate/hydroxypyruvate reductase B"/>
    <property type="match status" value="1"/>
</dbReference>
<dbReference type="Gene3D" id="3.40.50.720">
    <property type="entry name" value="NAD(P)-binding Rossmann-like Domain"/>
    <property type="match status" value="2"/>
</dbReference>
<dbReference type="HAMAP" id="MF_01667">
    <property type="entry name" value="2_Hacid_dh_C_GhrB"/>
    <property type="match status" value="1"/>
</dbReference>
<dbReference type="InterPro" id="IPR050223">
    <property type="entry name" value="D-isomer_2-hydroxyacid_DH"/>
</dbReference>
<dbReference type="InterPro" id="IPR006139">
    <property type="entry name" value="D-isomer_2_OHA_DH_cat_dom"/>
</dbReference>
<dbReference type="InterPro" id="IPR029753">
    <property type="entry name" value="D-isomer_DH_CS"/>
</dbReference>
<dbReference type="InterPro" id="IPR006140">
    <property type="entry name" value="D-isomer_DH_NAD-bd"/>
</dbReference>
<dbReference type="InterPro" id="IPR023756">
    <property type="entry name" value="Glyo/OHPyrv_Rdtase_B"/>
</dbReference>
<dbReference type="InterPro" id="IPR036291">
    <property type="entry name" value="NAD(P)-bd_dom_sf"/>
</dbReference>
<dbReference type="NCBIfam" id="NF011938">
    <property type="entry name" value="PRK15409.1"/>
    <property type="match status" value="1"/>
</dbReference>
<dbReference type="PANTHER" id="PTHR10996">
    <property type="entry name" value="2-HYDROXYACID DEHYDROGENASE-RELATED"/>
    <property type="match status" value="1"/>
</dbReference>
<dbReference type="PANTHER" id="PTHR10996:SF283">
    <property type="entry name" value="GLYOXYLATE_HYDROXYPYRUVATE REDUCTASE B"/>
    <property type="match status" value="1"/>
</dbReference>
<dbReference type="Pfam" id="PF00389">
    <property type="entry name" value="2-Hacid_dh"/>
    <property type="match status" value="1"/>
</dbReference>
<dbReference type="Pfam" id="PF02826">
    <property type="entry name" value="2-Hacid_dh_C"/>
    <property type="match status" value="1"/>
</dbReference>
<dbReference type="SUPFAM" id="SSF52283">
    <property type="entry name" value="Formate/glycerate dehydrogenase catalytic domain-like"/>
    <property type="match status" value="1"/>
</dbReference>
<dbReference type="SUPFAM" id="SSF51735">
    <property type="entry name" value="NAD(P)-binding Rossmann-fold domains"/>
    <property type="match status" value="1"/>
</dbReference>
<dbReference type="PROSITE" id="PS00670">
    <property type="entry name" value="D_2_HYDROXYACID_DH_2"/>
    <property type="match status" value="1"/>
</dbReference>
<dbReference type="PROSITE" id="PS00671">
    <property type="entry name" value="D_2_HYDROXYACID_DH_3"/>
    <property type="match status" value="1"/>
</dbReference>
<comment type="function">
    <text>Catalyzes the NADPH-dependent reduction of glyoxylate and hydroxypyruvate into glycolate and glycerate, respectively. Can also reduce 2,5-diketo-D-gluconate (25DKG) to 5-keto-D-gluconate (5KDG), 2-keto-D-gluconate (2KDG) to D-gluconate, and 2-keto-L-gulonate (2KLG) to L-idonate (IA), but it is not its physiological function. Inactive towards 2-oxoglutarate, oxaloacetate, pyruvate, 5-keto-D-gluconate, D-fructose and L-sorbose. Activity with NAD is very low.</text>
</comment>
<comment type="catalytic activity">
    <reaction evidence="2">
        <text>glycolate + NADP(+) = glyoxylate + NADPH + H(+)</text>
        <dbReference type="Rhea" id="RHEA:10992"/>
        <dbReference type="ChEBI" id="CHEBI:15378"/>
        <dbReference type="ChEBI" id="CHEBI:29805"/>
        <dbReference type="ChEBI" id="CHEBI:36655"/>
        <dbReference type="ChEBI" id="CHEBI:57783"/>
        <dbReference type="ChEBI" id="CHEBI:58349"/>
        <dbReference type="EC" id="1.1.1.79"/>
    </reaction>
</comment>
<comment type="catalytic activity">
    <reaction evidence="2">
        <text>(R)-glycerate + NAD(+) = 3-hydroxypyruvate + NADH + H(+)</text>
        <dbReference type="Rhea" id="RHEA:17905"/>
        <dbReference type="ChEBI" id="CHEBI:15378"/>
        <dbReference type="ChEBI" id="CHEBI:16659"/>
        <dbReference type="ChEBI" id="CHEBI:17180"/>
        <dbReference type="ChEBI" id="CHEBI:57540"/>
        <dbReference type="ChEBI" id="CHEBI:57945"/>
        <dbReference type="EC" id="1.1.1.81"/>
    </reaction>
</comment>
<comment type="catalytic activity">
    <reaction evidence="2">
        <text>(R)-glycerate + NADP(+) = 3-hydroxypyruvate + NADPH + H(+)</text>
        <dbReference type="Rhea" id="RHEA:18657"/>
        <dbReference type="ChEBI" id="CHEBI:15378"/>
        <dbReference type="ChEBI" id="CHEBI:16659"/>
        <dbReference type="ChEBI" id="CHEBI:17180"/>
        <dbReference type="ChEBI" id="CHEBI:57783"/>
        <dbReference type="ChEBI" id="CHEBI:58349"/>
        <dbReference type="EC" id="1.1.1.81"/>
    </reaction>
</comment>
<comment type="catalytic activity">
    <reaction evidence="2">
        <text>D-gluconate + NADP(+) = 2-dehydro-D-gluconate + NADPH + H(+)</text>
        <dbReference type="Rhea" id="RHEA:16653"/>
        <dbReference type="ChEBI" id="CHEBI:15378"/>
        <dbReference type="ChEBI" id="CHEBI:16808"/>
        <dbReference type="ChEBI" id="CHEBI:18391"/>
        <dbReference type="ChEBI" id="CHEBI:57783"/>
        <dbReference type="ChEBI" id="CHEBI:58349"/>
        <dbReference type="EC" id="1.1.1.215"/>
    </reaction>
</comment>
<comment type="biophysicochemical properties">
    <kinetics>
        <KM evidence="2 3">0.7 mM for hydroxypyruvate (at pH 7.5)</KM>
        <KM evidence="2 3">1.5 mM for 2-oxo-D-gluconate (at pH 7.5)</KM>
        <KM evidence="2 3">6.6 mM for glyoxylate (at pH 7.5)</KM>
        <Vmax evidence="2 3">345.0 umol/min/mg enzyme with glyoxylate as substrate (at pH 7)</Vmax>
        <Vmax evidence="2 3">123.0 umol/min/mg enzyme with hydroxypyruvate as substrate (at pH 7)</Vmax>
        <Vmax evidence="2 3">69.0 umol/min/mg enzyme with 2-oxo-D-gluconate as substrate (at pH 7)</Vmax>
        <text>The catalytic efficiency is better for hydroxypyruvate than glyoxylate with NADPH as electron donor.</text>
    </kinetics>
    <phDependence>
        <text evidence="2 3">Optimum pH is 7.5.</text>
    </phDependence>
</comment>
<comment type="subunit">
    <text evidence="3">Homodimer.</text>
</comment>
<comment type="interaction">
    <interactant intactId="EBI-562547">
        <id>P37666</id>
    </interactant>
    <interactant intactId="EBI-542427">
        <id>P36938</id>
        <label>pgm</label>
    </interactant>
    <organismsDiffer>false</organismsDiffer>
    <experiments>2</experiments>
</comment>
<comment type="subcellular location">
    <subcellularLocation>
        <location evidence="4">Cytoplasm</location>
    </subcellularLocation>
</comment>
<comment type="induction">
    <text evidence="2">Constitutively expressed.</text>
</comment>
<comment type="similarity">
    <text evidence="4">Belongs to the D-isomer specific 2-hydroxyacid dehydrogenase family. GhrB subfamily.</text>
</comment>
<comment type="sequence caution" evidence="4">
    <conflict type="erroneous initiation">
        <sequence resource="EMBL-CDS" id="AAB18530"/>
    </conflict>
    <text>Extended N-terminus.</text>
</comment>
<comment type="sequence caution" evidence="4">
    <conflict type="frameshift">
        <sequence resource="EMBL-CDS" id="AAB18530"/>
    </conflict>
</comment>
<evidence type="ECO:0000250" key="1"/>
<evidence type="ECO:0000269" key="2">
    <source>
    </source>
</evidence>
<evidence type="ECO:0000269" key="3">
    <source>
    </source>
</evidence>
<evidence type="ECO:0000305" key="4"/>
<gene>
    <name type="primary">ghrB</name>
    <name type="synonym">tkrA</name>
    <name type="synonym">yiaE</name>
    <name type="ordered locus">b3553</name>
    <name type="ordered locus">JW5656</name>
</gene>
<sequence length="324" mass="35396">MKPSVILYKALPDDLLQRLQEHFTVHQVANLSPQTVEQNAAIFAEAEGLLGSNENVNAALLEKMPKLRATSTISVGYDNFDVDALTARKILLMHTPTVLTETVADTLMALVLSTARRVVEVAERVKAGEWTASIGPDWYGTDVHHKTLGIVGMGRIGMALAQRAHFGFNMPILYNARRHHKEAEERFNARYCDLDTLLQESDFVCLILPLTDETHHLFGAEQFAKMKSSAIFINAGRGPVVDENALIAALQKGEIHAAGLDVFEQEPLSVDSPLLSMANVVAVPHIGSATHETRYGMAACAVDNLIDALQGKVEKNCVNPHVAD</sequence>
<accession>P37666</accession>
<accession>Q2M7L4</accession>
<protein>
    <recommendedName>
        <fullName>Glyoxylate/hydroxypyruvate reductase B</fullName>
        <ecNumber>1.1.1.79</ecNumber>
        <ecNumber>1.1.1.81</ecNumber>
    </recommendedName>
    <alternativeName>
        <fullName>2-ketoaldonate reductase</fullName>
    </alternativeName>
    <alternativeName>
        <fullName>2-ketogluconate reductase</fullName>
        <shortName>2KR</shortName>
        <ecNumber>1.1.1.215</ecNumber>
    </alternativeName>
</protein>
<name>GHRB_ECOLI</name>
<organism>
    <name type="scientific">Escherichia coli (strain K12)</name>
    <dbReference type="NCBI Taxonomy" id="83333"/>
    <lineage>
        <taxon>Bacteria</taxon>
        <taxon>Pseudomonadati</taxon>
        <taxon>Pseudomonadota</taxon>
        <taxon>Gammaproteobacteria</taxon>
        <taxon>Enterobacterales</taxon>
        <taxon>Enterobacteriaceae</taxon>
        <taxon>Escherichia</taxon>
    </lineage>
</organism>